<organism>
    <name type="scientific">Ligilactobacillus salivarius (strain UCC118)</name>
    <name type="common">Lactobacillus salivarius</name>
    <dbReference type="NCBI Taxonomy" id="362948"/>
    <lineage>
        <taxon>Bacteria</taxon>
        <taxon>Bacillati</taxon>
        <taxon>Bacillota</taxon>
        <taxon>Bacilli</taxon>
        <taxon>Lactobacillales</taxon>
        <taxon>Lactobacillaceae</taxon>
        <taxon>Ligilactobacillus</taxon>
    </lineage>
</organism>
<accession>Q1WUA0</accession>
<sequence length="232" mass="26957">MIEGLQEMLKRDFNITFKDVDLLDAAFTHASYVNETPERKKKLKYYERIEFLGDAVMQLCVSEYIYEHYPEMPEGKMSRLRAAMVRADSFSKFAIECHFNEYIRLGKGEEKGNARQRPSLLCDIFESFIGALYLDQGKDEVVRFISKVIFPKLELGWFDHMMDNKTELQEVLQQNGECKIKYNEVNVTGPDNERVYTMNVVVNNEVMGEGTGRTKKAAEQMAAYQALKKLRK</sequence>
<feature type="chain" id="PRO_1000075771" description="Ribonuclease 3">
    <location>
        <begin position="1"/>
        <end position="232"/>
    </location>
</feature>
<feature type="domain" description="RNase III" evidence="1">
    <location>
        <begin position="6"/>
        <end position="137"/>
    </location>
</feature>
<feature type="domain" description="DRBM" evidence="1">
    <location>
        <begin position="163"/>
        <end position="232"/>
    </location>
</feature>
<feature type="active site" evidence="1">
    <location>
        <position position="54"/>
    </location>
</feature>
<feature type="active site" evidence="1">
    <location>
        <position position="126"/>
    </location>
</feature>
<feature type="binding site" evidence="1">
    <location>
        <position position="50"/>
    </location>
    <ligand>
        <name>Mg(2+)</name>
        <dbReference type="ChEBI" id="CHEBI:18420"/>
    </ligand>
</feature>
<feature type="binding site" evidence="1">
    <location>
        <position position="123"/>
    </location>
    <ligand>
        <name>Mg(2+)</name>
        <dbReference type="ChEBI" id="CHEBI:18420"/>
    </ligand>
</feature>
<feature type="binding site" evidence="1">
    <location>
        <position position="126"/>
    </location>
    <ligand>
        <name>Mg(2+)</name>
        <dbReference type="ChEBI" id="CHEBI:18420"/>
    </ligand>
</feature>
<proteinExistence type="inferred from homology"/>
<protein>
    <recommendedName>
        <fullName evidence="1">Ribonuclease 3</fullName>
        <ecNumber evidence="1">3.1.26.3</ecNumber>
    </recommendedName>
    <alternativeName>
        <fullName evidence="1">Ribonuclease III</fullName>
        <shortName evidence="1">RNase III</shortName>
    </alternativeName>
</protein>
<comment type="function">
    <text evidence="1">Digests double-stranded RNA. Involved in the processing of primary rRNA transcript to yield the immediate precursors to the large and small rRNAs (23S and 16S). Processes some mRNAs, and tRNAs when they are encoded in the rRNA operon. Processes pre-crRNA and tracrRNA of type II CRISPR loci if present in the organism.</text>
</comment>
<comment type="catalytic activity">
    <reaction evidence="1">
        <text>Endonucleolytic cleavage to 5'-phosphomonoester.</text>
        <dbReference type="EC" id="3.1.26.3"/>
    </reaction>
</comment>
<comment type="cofactor">
    <cofactor evidence="1">
        <name>Mg(2+)</name>
        <dbReference type="ChEBI" id="CHEBI:18420"/>
    </cofactor>
</comment>
<comment type="subunit">
    <text evidence="1">Homodimer.</text>
</comment>
<comment type="subcellular location">
    <subcellularLocation>
        <location evidence="1">Cytoplasm</location>
    </subcellularLocation>
</comment>
<comment type="similarity">
    <text evidence="1">Belongs to the ribonuclease III family.</text>
</comment>
<keyword id="KW-0963">Cytoplasm</keyword>
<keyword id="KW-0255">Endonuclease</keyword>
<keyword id="KW-0378">Hydrolase</keyword>
<keyword id="KW-0460">Magnesium</keyword>
<keyword id="KW-0479">Metal-binding</keyword>
<keyword id="KW-0507">mRNA processing</keyword>
<keyword id="KW-0540">Nuclease</keyword>
<keyword id="KW-1185">Reference proteome</keyword>
<keyword id="KW-0694">RNA-binding</keyword>
<keyword id="KW-0698">rRNA processing</keyword>
<keyword id="KW-0699">rRNA-binding</keyword>
<keyword id="KW-0819">tRNA processing</keyword>
<evidence type="ECO:0000255" key="1">
    <source>
        <dbReference type="HAMAP-Rule" id="MF_00104"/>
    </source>
</evidence>
<dbReference type="EC" id="3.1.26.3" evidence="1"/>
<dbReference type="EMBL" id="CP000233">
    <property type="protein sequence ID" value="ABD99435.1"/>
    <property type="molecule type" value="Genomic_DNA"/>
</dbReference>
<dbReference type="RefSeq" id="WP_003701755.1">
    <property type="nucleotide sequence ID" value="NC_007929.1"/>
</dbReference>
<dbReference type="RefSeq" id="YP_535518.1">
    <property type="nucleotide sequence ID" value="NC_007929.1"/>
</dbReference>
<dbReference type="SMR" id="Q1WUA0"/>
<dbReference type="STRING" id="362948.LSL_0625"/>
<dbReference type="KEGG" id="lsl:LSL_0625"/>
<dbReference type="PATRIC" id="fig|362948.14.peg.705"/>
<dbReference type="HOGENOM" id="CLU_000907_1_3_9"/>
<dbReference type="OrthoDB" id="9805026at2"/>
<dbReference type="Proteomes" id="UP000006559">
    <property type="component" value="Chromosome"/>
</dbReference>
<dbReference type="GO" id="GO:0005737">
    <property type="term" value="C:cytoplasm"/>
    <property type="evidence" value="ECO:0007669"/>
    <property type="project" value="UniProtKB-SubCell"/>
</dbReference>
<dbReference type="GO" id="GO:0003725">
    <property type="term" value="F:double-stranded RNA binding"/>
    <property type="evidence" value="ECO:0007669"/>
    <property type="project" value="TreeGrafter"/>
</dbReference>
<dbReference type="GO" id="GO:0046872">
    <property type="term" value="F:metal ion binding"/>
    <property type="evidence" value="ECO:0007669"/>
    <property type="project" value="UniProtKB-KW"/>
</dbReference>
<dbReference type="GO" id="GO:0004525">
    <property type="term" value="F:ribonuclease III activity"/>
    <property type="evidence" value="ECO:0007669"/>
    <property type="project" value="UniProtKB-UniRule"/>
</dbReference>
<dbReference type="GO" id="GO:0019843">
    <property type="term" value="F:rRNA binding"/>
    <property type="evidence" value="ECO:0007669"/>
    <property type="project" value="UniProtKB-KW"/>
</dbReference>
<dbReference type="GO" id="GO:0006397">
    <property type="term" value="P:mRNA processing"/>
    <property type="evidence" value="ECO:0007669"/>
    <property type="project" value="UniProtKB-UniRule"/>
</dbReference>
<dbReference type="GO" id="GO:0010468">
    <property type="term" value="P:regulation of gene expression"/>
    <property type="evidence" value="ECO:0007669"/>
    <property type="project" value="TreeGrafter"/>
</dbReference>
<dbReference type="GO" id="GO:0006364">
    <property type="term" value="P:rRNA processing"/>
    <property type="evidence" value="ECO:0007669"/>
    <property type="project" value="UniProtKB-UniRule"/>
</dbReference>
<dbReference type="GO" id="GO:0008033">
    <property type="term" value="P:tRNA processing"/>
    <property type="evidence" value="ECO:0007669"/>
    <property type="project" value="UniProtKB-KW"/>
</dbReference>
<dbReference type="CDD" id="cd10845">
    <property type="entry name" value="DSRM_RNAse_III_family"/>
    <property type="match status" value="1"/>
</dbReference>
<dbReference type="CDD" id="cd00593">
    <property type="entry name" value="RIBOc"/>
    <property type="match status" value="1"/>
</dbReference>
<dbReference type="FunFam" id="1.10.1520.10:FF:000001">
    <property type="entry name" value="Ribonuclease 3"/>
    <property type="match status" value="1"/>
</dbReference>
<dbReference type="FunFam" id="3.30.160.20:FF:000003">
    <property type="entry name" value="Ribonuclease 3"/>
    <property type="match status" value="1"/>
</dbReference>
<dbReference type="Gene3D" id="3.30.160.20">
    <property type="match status" value="1"/>
</dbReference>
<dbReference type="Gene3D" id="1.10.1520.10">
    <property type="entry name" value="Ribonuclease III domain"/>
    <property type="match status" value="1"/>
</dbReference>
<dbReference type="HAMAP" id="MF_00104">
    <property type="entry name" value="RNase_III"/>
    <property type="match status" value="1"/>
</dbReference>
<dbReference type="InterPro" id="IPR014720">
    <property type="entry name" value="dsRBD_dom"/>
</dbReference>
<dbReference type="InterPro" id="IPR011907">
    <property type="entry name" value="RNase_III"/>
</dbReference>
<dbReference type="InterPro" id="IPR000999">
    <property type="entry name" value="RNase_III_dom"/>
</dbReference>
<dbReference type="InterPro" id="IPR036389">
    <property type="entry name" value="RNase_III_sf"/>
</dbReference>
<dbReference type="NCBIfam" id="TIGR02191">
    <property type="entry name" value="RNaseIII"/>
    <property type="match status" value="1"/>
</dbReference>
<dbReference type="PANTHER" id="PTHR11207:SF0">
    <property type="entry name" value="RIBONUCLEASE 3"/>
    <property type="match status" value="1"/>
</dbReference>
<dbReference type="PANTHER" id="PTHR11207">
    <property type="entry name" value="RIBONUCLEASE III"/>
    <property type="match status" value="1"/>
</dbReference>
<dbReference type="Pfam" id="PF00035">
    <property type="entry name" value="dsrm"/>
    <property type="match status" value="1"/>
</dbReference>
<dbReference type="Pfam" id="PF14622">
    <property type="entry name" value="Ribonucleas_3_3"/>
    <property type="match status" value="1"/>
</dbReference>
<dbReference type="SMART" id="SM00358">
    <property type="entry name" value="DSRM"/>
    <property type="match status" value="1"/>
</dbReference>
<dbReference type="SMART" id="SM00535">
    <property type="entry name" value="RIBOc"/>
    <property type="match status" value="1"/>
</dbReference>
<dbReference type="SUPFAM" id="SSF54768">
    <property type="entry name" value="dsRNA-binding domain-like"/>
    <property type="match status" value="1"/>
</dbReference>
<dbReference type="SUPFAM" id="SSF69065">
    <property type="entry name" value="RNase III domain-like"/>
    <property type="match status" value="1"/>
</dbReference>
<dbReference type="PROSITE" id="PS50137">
    <property type="entry name" value="DS_RBD"/>
    <property type="match status" value="1"/>
</dbReference>
<dbReference type="PROSITE" id="PS50142">
    <property type="entry name" value="RNASE_3_2"/>
    <property type="match status" value="1"/>
</dbReference>
<reference key="1">
    <citation type="journal article" date="2006" name="Proc. Natl. Acad. Sci. U.S.A.">
        <title>Multireplicon genome architecture of Lactobacillus salivarius.</title>
        <authorList>
            <person name="Claesson M.J."/>
            <person name="Li Y."/>
            <person name="Leahy S."/>
            <person name="Canchaya C."/>
            <person name="van Pijkeren J.P."/>
            <person name="Cerdeno-Tarraga A.M."/>
            <person name="Parkhill J."/>
            <person name="Flynn S."/>
            <person name="O'Sullivan G.C."/>
            <person name="Collins J.K."/>
            <person name="Higgins D."/>
            <person name="Shanahan F."/>
            <person name="Fitzgerald G.F."/>
            <person name="van Sinderen D."/>
            <person name="O'Toole P.W."/>
        </authorList>
    </citation>
    <scope>NUCLEOTIDE SEQUENCE [LARGE SCALE GENOMIC DNA]</scope>
    <source>
        <strain>UCC118</strain>
    </source>
</reference>
<name>RNC_LIGS1</name>
<gene>
    <name evidence="1" type="primary">rnc</name>
    <name type="ordered locus">LSL_0625</name>
</gene>